<feature type="chain" id="PRO_1000001513" description="Recombination protein RecR">
    <location>
        <begin position="1"/>
        <end position="202"/>
    </location>
</feature>
<feature type="domain" description="Toprim" evidence="1">
    <location>
        <begin position="84"/>
        <end position="179"/>
    </location>
</feature>
<feature type="zinc finger region" description="C4-type" evidence="1">
    <location>
        <begin position="61"/>
        <end position="76"/>
    </location>
</feature>
<evidence type="ECO:0000255" key="1">
    <source>
        <dbReference type="HAMAP-Rule" id="MF_00017"/>
    </source>
</evidence>
<name>RECR_BORA1</name>
<sequence>MDNALPEPEPLIALIEALRRLPGVGARSARRMAYHLLQHDVQGADMLGRALAGAVQNLRRCARCNSFTEDDVCVICANPKRDASLLCIVETPADQNVIESSHGYRGLYYVLMGRLAPLEGVGPRELDFQRVLDRAADGLVQEVILATNFTAEGETTAHFLGEALAERGLKVTRLARGVPAGSELEYVDAGTIAWALMERRAT</sequence>
<organism>
    <name type="scientific">Bordetella avium (strain 197N)</name>
    <dbReference type="NCBI Taxonomy" id="360910"/>
    <lineage>
        <taxon>Bacteria</taxon>
        <taxon>Pseudomonadati</taxon>
        <taxon>Pseudomonadota</taxon>
        <taxon>Betaproteobacteria</taxon>
        <taxon>Burkholderiales</taxon>
        <taxon>Alcaligenaceae</taxon>
        <taxon>Bordetella</taxon>
    </lineage>
</organism>
<accession>Q2KVU4</accession>
<comment type="function">
    <text evidence="1">May play a role in DNA repair. It seems to be involved in an RecBC-independent recombinational process of DNA repair. It may act with RecF and RecO.</text>
</comment>
<comment type="similarity">
    <text evidence="1">Belongs to the RecR family.</text>
</comment>
<dbReference type="EMBL" id="AM167904">
    <property type="protein sequence ID" value="CAJ48527.1"/>
    <property type="molecule type" value="Genomic_DNA"/>
</dbReference>
<dbReference type="RefSeq" id="WP_012416606.1">
    <property type="nucleotide sequence ID" value="NC_010645.1"/>
</dbReference>
<dbReference type="SMR" id="Q2KVU4"/>
<dbReference type="STRING" id="360910.BAV0916"/>
<dbReference type="GeneID" id="92935891"/>
<dbReference type="KEGG" id="bav:BAV0916"/>
<dbReference type="eggNOG" id="COG0353">
    <property type="taxonomic scope" value="Bacteria"/>
</dbReference>
<dbReference type="HOGENOM" id="CLU_060739_1_2_4"/>
<dbReference type="OrthoDB" id="9802672at2"/>
<dbReference type="Proteomes" id="UP000001977">
    <property type="component" value="Chromosome"/>
</dbReference>
<dbReference type="GO" id="GO:0003677">
    <property type="term" value="F:DNA binding"/>
    <property type="evidence" value="ECO:0007669"/>
    <property type="project" value="UniProtKB-UniRule"/>
</dbReference>
<dbReference type="GO" id="GO:0008270">
    <property type="term" value="F:zinc ion binding"/>
    <property type="evidence" value="ECO:0007669"/>
    <property type="project" value="UniProtKB-KW"/>
</dbReference>
<dbReference type="GO" id="GO:0006310">
    <property type="term" value="P:DNA recombination"/>
    <property type="evidence" value="ECO:0007669"/>
    <property type="project" value="UniProtKB-UniRule"/>
</dbReference>
<dbReference type="GO" id="GO:0006281">
    <property type="term" value="P:DNA repair"/>
    <property type="evidence" value="ECO:0007669"/>
    <property type="project" value="UniProtKB-UniRule"/>
</dbReference>
<dbReference type="CDD" id="cd01025">
    <property type="entry name" value="TOPRIM_recR"/>
    <property type="match status" value="1"/>
</dbReference>
<dbReference type="Gene3D" id="3.40.1360.10">
    <property type="match status" value="1"/>
</dbReference>
<dbReference type="Gene3D" id="1.10.8.420">
    <property type="entry name" value="RecR Domain 1"/>
    <property type="match status" value="1"/>
</dbReference>
<dbReference type="HAMAP" id="MF_00017">
    <property type="entry name" value="RecR"/>
    <property type="match status" value="1"/>
</dbReference>
<dbReference type="InterPro" id="IPR000093">
    <property type="entry name" value="DNA_Rcmb_RecR"/>
</dbReference>
<dbReference type="InterPro" id="IPR023627">
    <property type="entry name" value="Rcmb_RecR"/>
</dbReference>
<dbReference type="InterPro" id="IPR015967">
    <property type="entry name" value="Rcmb_RecR_Znf"/>
</dbReference>
<dbReference type="InterPro" id="IPR006171">
    <property type="entry name" value="TOPRIM_dom"/>
</dbReference>
<dbReference type="InterPro" id="IPR034137">
    <property type="entry name" value="TOPRIM_RecR"/>
</dbReference>
<dbReference type="NCBIfam" id="TIGR00615">
    <property type="entry name" value="recR"/>
    <property type="match status" value="1"/>
</dbReference>
<dbReference type="PANTHER" id="PTHR30446">
    <property type="entry name" value="RECOMBINATION PROTEIN RECR"/>
    <property type="match status" value="1"/>
</dbReference>
<dbReference type="PANTHER" id="PTHR30446:SF0">
    <property type="entry name" value="RECOMBINATION PROTEIN RECR"/>
    <property type="match status" value="1"/>
</dbReference>
<dbReference type="Pfam" id="PF21175">
    <property type="entry name" value="RecR_C"/>
    <property type="match status" value="1"/>
</dbReference>
<dbReference type="Pfam" id="PF21176">
    <property type="entry name" value="RecR_HhH"/>
    <property type="match status" value="1"/>
</dbReference>
<dbReference type="Pfam" id="PF02132">
    <property type="entry name" value="RecR_ZnF"/>
    <property type="match status" value="1"/>
</dbReference>
<dbReference type="Pfam" id="PF13662">
    <property type="entry name" value="Toprim_4"/>
    <property type="match status" value="1"/>
</dbReference>
<dbReference type="SMART" id="SM00493">
    <property type="entry name" value="TOPRIM"/>
    <property type="match status" value="1"/>
</dbReference>
<dbReference type="SUPFAM" id="SSF111304">
    <property type="entry name" value="Recombination protein RecR"/>
    <property type="match status" value="1"/>
</dbReference>
<dbReference type="PROSITE" id="PS01300">
    <property type="entry name" value="RECR"/>
    <property type="match status" value="1"/>
</dbReference>
<dbReference type="PROSITE" id="PS50880">
    <property type="entry name" value="TOPRIM"/>
    <property type="match status" value="1"/>
</dbReference>
<reference key="1">
    <citation type="journal article" date="2006" name="J. Bacteriol.">
        <title>Comparison of the genome sequence of the poultry pathogen Bordetella avium with those of B. bronchiseptica, B. pertussis, and B. parapertussis reveals extensive diversity in surface structures associated with host interaction.</title>
        <authorList>
            <person name="Sebaihia M."/>
            <person name="Preston A."/>
            <person name="Maskell D.J."/>
            <person name="Kuzmiak H."/>
            <person name="Connell T.D."/>
            <person name="King N.D."/>
            <person name="Orndorff P.E."/>
            <person name="Miyamoto D.M."/>
            <person name="Thomson N.R."/>
            <person name="Harris D."/>
            <person name="Goble A."/>
            <person name="Lord A."/>
            <person name="Murphy L."/>
            <person name="Quail M.A."/>
            <person name="Rutter S."/>
            <person name="Squares R."/>
            <person name="Squares S."/>
            <person name="Woodward J."/>
            <person name="Parkhill J."/>
            <person name="Temple L.M."/>
        </authorList>
    </citation>
    <scope>NUCLEOTIDE SEQUENCE [LARGE SCALE GENOMIC DNA]</scope>
    <source>
        <strain>197N</strain>
    </source>
</reference>
<gene>
    <name evidence="1" type="primary">recR</name>
    <name type="ordered locus">BAV0916</name>
</gene>
<keyword id="KW-0227">DNA damage</keyword>
<keyword id="KW-0233">DNA recombination</keyword>
<keyword id="KW-0234">DNA repair</keyword>
<keyword id="KW-0479">Metal-binding</keyword>
<keyword id="KW-1185">Reference proteome</keyword>
<keyword id="KW-0862">Zinc</keyword>
<keyword id="KW-0863">Zinc-finger</keyword>
<protein>
    <recommendedName>
        <fullName evidence="1">Recombination protein RecR</fullName>
    </recommendedName>
</protein>
<proteinExistence type="inferred from homology"/>